<proteinExistence type="evidence at transcript level"/>
<accession>P33209</accession>
<name>NOLT_RHIFR</name>
<protein>
    <recommendedName>
        <fullName>Nodulation protein NolT</fullName>
    </recommendedName>
</protein>
<evidence type="ECO:0000255" key="1"/>
<evidence type="ECO:0000305" key="2"/>
<sequence length="289" mass="31241">MFGSAHGDTTSSDTSGRRPLRLVVLPLLLALSSCKVDLYTQLQEREANEIVALLMDNGVDAVRVAGKDGTSTIQVDEKLLAFSIKLLNGKGLPRQSFKNLGEIFQGSGLIASPTEERARYVYALSEELSHTISDIDGVFSARVHVVLPHNDLLRAGDTPSSASVFIRHDAKTNLPALLPKIKMLVAESIEGLAYDKVEVVLVPVERSAQEQRSLLEPDLAQASRPIPVPLLAVAVGVGAAVFAVTCYLLFIVLGHRRRQLTGELSRVQERPGVSALAAIRKKIPALGRR</sequence>
<feature type="signal peptide" evidence="2">
    <location>
        <begin position="1"/>
        <end position="33"/>
    </location>
</feature>
<feature type="chain" id="PRO_0000018227" description="Nodulation protein NolT">
    <location>
        <begin position="34"/>
        <end position="289"/>
    </location>
</feature>
<feature type="transmembrane region" description="Helical" evidence="1">
    <location>
        <begin position="233"/>
        <end position="253"/>
    </location>
</feature>
<feature type="lipid moiety-binding region" description="N-palmitoyl cysteine" evidence="1">
    <location>
        <position position="34"/>
    </location>
</feature>
<feature type="lipid moiety-binding region" description="S-diacylglycerol cysteine" evidence="1">
    <location>
        <position position="34"/>
    </location>
</feature>
<dbReference type="EMBL" id="L12251">
    <property type="protein sequence ID" value="AAB17677.1"/>
    <property type="molecule type" value="Genomic_DNA"/>
</dbReference>
<dbReference type="PIR" id="S35022">
    <property type="entry name" value="S35022"/>
</dbReference>
<dbReference type="SMR" id="P33209"/>
<dbReference type="GO" id="GO:0009279">
    <property type="term" value="C:cell outer membrane"/>
    <property type="evidence" value="ECO:0007669"/>
    <property type="project" value="UniProtKB-SubCell"/>
</dbReference>
<dbReference type="GO" id="GO:0009306">
    <property type="term" value="P:protein secretion"/>
    <property type="evidence" value="ECO:0007669"/>
    <property type="project" value="InterPro"/>
</dbReference>
<dbReference type="Gene3D" id="3.30.300.30">
    <property type="match status" value="1"/>
</dbReference>
<dbReference type="Gene3D" id="3.30.70.1530">
    <property type="entry name" value="Hypothetical protein rpa1041"/>
    <property type="match status" value="1"/>
</dbReference>
<dbReference type="InterPro" id="IPR045851">
    <property type="entry name" value="AMP-bd_C_sf"/>
</dbReference>
<dbReference type="InterPro" id="IPR006182">
    <property type="entry name" value="FliF_N_dom"/>
</dbReference>
<dbReference type="InterPro" id="IPR003282">
    <property type="entry name" value="T3SS_SctJ"/>
</dbReference>
<dbReference type="InterPro" id="IPR043427">
    <property type="entry name" value="YscJ/FliF"/>
</dbReference>
<dbReference type="NCBIfam" id="TIGR02544">
    <property type="entry name" value="III_secr_YscJ"/>
    <property type="match status" value="1"/>
</dbReference>
<dbReference type="PANTHER" id="PTHR30046">
    <property type="entry name" value="FLAGELLAR M-RING PROTEIN"/>
    <property type="match status" value="1"/>
</dbReference>
<dbReference type="PANTHER" id="PTHR30046:SF2">
    <property type="entry name" value="YOP PROTEINS TRANSLOCATION LIPOPROTEIN J"/>
    <property type="match status" value="1"/>
</dbReference>
<dbReference type="Pfam" id="PF01514">
    <property type="entry name" value="YscJ_FliF"/>
    <property type="match status" value="1"/>
</dbReference>
<dbReference type="PRINTS" id="PR01338">
    <property type="entry name" value="TYPE3OMKPROT"/>
</dbReference>
<organism>
    <name type="scientific">Rhizobium fredii</name>
    <name type="common">Sinorhizobium fredii</name>
    <dbReference type="NCBI Taxonomy" id="380"/>
    <lineage>
        <taxon>Bacteria</taxon>
        <taxon>Pseudomonadati</taxon>
        <taxon>Pseudomonadota</taxon>
        <taxon>Alphaproteobacteria</taxon>
        <taxon>Hyphomicrobiales</taxon>
        <taxon>Rhizobiaceae</taxon>
        <taxon>Sinorhizobium/Ensifer group</taxon>
        <taxon>Sinorhizobium</taxon>
    </lineage>
</organism>
<geneLocation type="plasmid">
    <name>sym</name>
</geneLocation>
<comment type="function">
    <text>Regulates cultivar-specific nodulation of soybean.</text>
</comment>
<comment type="subcellular location">
    <subcellularLocation>
        <location evidence="2">Cell outer membrane</location>
        <topology evidence="2">Lipid-anchor</topology>
    </subcellularLocation>
</comment>
<comment type="induction">
    <text>By flavonoid signal compounds.</text>
</comment>
<comment type="similarity">
    <text evidence="2">Belongs to the YscJ lipoprotein family.</text>
</comment>
<keyword id="KW-0998">Cell outer membrane</keyword>
<keyword id="KW-0449">Lipoprotein</keyword>
<keyword id="KW-0472">Membrane</keyword>
<keyword id="KW-0536">Nodulation</keyword>
<keyword id="KW-0564">Palmitate</keyword>
<keyword id="KW-0614">Plasmid</keyword>
<keyword id="KW-0732">Signal</keyword>
<keyword id="KW-0812">Transmembrane</keyword>
<keyword id="KW-1133">Transmembrane helix</keyword>
<gene>
    <name type="primary">nolT</name>
</gene>
<reference key="1">
    <citation type="journal article" date="1993" name="Mol. Microbiol.">
        <title>Molecular cloning and characterization of a sym plasmid locus that regulates cultivar-specific nodulation of soybean by Rhizobium fredii USDA257.</title>
        <authorList>
            <person name="Meinhardt L.W."/>
            <person name="Krishnan H.B."/>
            <person name="Balatti P.A."/>
            <person name="Pueppke S.G."/>
        </authorList>
    </citation>
    <scope>NUCLEOTIDE SEQUENCE [GENOMIC DNA]</scope>
    <source>
        <strain>USDA 257</strain>
    </source>
</reference>